<keyword id="KW-0963">Cytoplasm</keyword>
<keyword id="KW-0444">Lipid biosynthesis</keyword>
<keyword id="KW-0443">Lipid metabolism</keyword>
<keyword id="KW-0594">Phospholipid biosynthesis</keyword>
<keyword id="KW-1208">Phospholipid metabolism</keyword>
<keyword id="KW-1185">Reference proteome</keyword>
<keyword id="KW-0808">Transferase</keyword>
<name>PLSX_GLUOX</name>
<organism>
    <name type="scientific">Gluconobacter oxydans (strain 621H)</name>
    <name type="common">Gluconobacter suboxydans</name>
    <dbReference type="NCBI Taxonomy" id="290633"/>
    <lineage>
        <taxon>Bacteria</taxon>
        <taxon>Pseudomonadati</taxon>
        <taxon>Pseudomonadota</taxon>
        <taxon>Alphaproteobacteria</taxon>
        <taxon>Acetobacterales</taxon>
        <taxon>Acetobacteraceae</taxon>
        <taxon>Gluconobacter</taxon>
    </lineage>
</organism>
<feature type="chain" id="PRO_0000329230" description="Phosphate acyltransferase">
    <location>
        <begin position="1"/>
        <end position="369"/>
    </location>
</feature>
<accession>Q5FUN6</accession>
<comment type="function">
    <text evidence="1">Catalyzes the reversible formation of acyl-phosphate (acyl-PO(4)) from acyl-[acyl-carrier-protein] (acyl-ACP). This enzyme utilizes acyl-ACP as fatty acyl donor, but not acyl-CoA.</text>
</comment>
<comment type="catalytic activity">
    <reaction evidence="1">
        <text>a fatty acyl-[ACP] + phosphate = an acyl phosphate + holo-[ACP]</text>
        <dbReference type="Rhea" id="RHEA:42292"/>
        <dbReference type="Rhea" id="RHEA-COMP:9685"/>
        <dbReference type="Rhea" id="RHEA-COMP:14125"/>
        <dbReference type="ChEBI" id="CHEBI:43474"/>
        <dbReference type="ChEBI" id="CHEBI:59918"/>
        <dbReference type="ChEBI" id="CHEBI:64479"/>
        <dbReference type="ChEBI" id="CHEBI:138651"/>
        <dbReference type="EC" id="2.3.1.274"/>
    </reaction>
</comment>
<comment type="pathway">
    <text evidence="1">Lipid metabolism; phospholipid metabolism.</text>
</comment>
<comment type="subunit">
    <text evidence="1">Homodimer. Probably interacts with PlsY.</text>
</comment>
<comment type="subcellular location">
    <subcellularLocation>
        <location evidence="1">Cytoplasm</location>
    </subcellularLocation>
    <text evidence="1">Associated with the membrane possibly through PlsY.</text>
</comment>
<comment type="similarity">
    <text evidence="1">Belongs to the PlsX family.</text>
</comment>
<dbReference type="EC" id="2.3.1.274" evidence="1"/>
<dbReference type="EMBL" id="CP000009">
    <property type="protein sequence ID" value="AAW59910.1"/>
    <property type="molecule type" value="Genomic_DNA"/>
</dbReference>
<dbReference type="RefSeq" id="WP_011251714.1">
    <property type="nucleotide sequence ID" value="NZ_LT900338.1"/>
</dbReference>
<dbReference type="SMR" id="Q5FUN6"/>
<dbReference type="STRING" id="290633.GOX0116"/>
<dbReference type="KEGG" id="gox:GOX0116"/>
<dbReference type="eggNOG" id="COG0416">
    <property type="taxonomic scope" value="Bacteria"/>
</dbReference>
<dbReference type="HOGENOM" id="CLU_039379_1_0_5"/>
<dbReference type="UniPathway" id="UPA00085"/>
<dbReference type="Proteomes" id="UP000006375">
    <property type="component" value="Chromosome"/>
</dbReference>
<dbReference type="GO" id="GO:0005737">
    <property type="term" value="C:cytoplasm"/>
    <property type="evidence" value="ECO:0007669"/>
    <property type="project" value="UniProtKB-SubCell"/>
</dbReference>
<dbReference type="GO" id="GO:0043811">
    <property type="term" value="F:phosphate:acyl-[acyl carrier protein] acyltransferase activity"/>
    <property type="evidence" value="ECO:0007669"/>
    <property type="project" value="UniProtKB-UniRule"/>
</dbReference>
<dbReference type="GO" id="GO:0006633">
    <property type="term" value="P:fatty acid biosynthetic process"/>
    <property type="evidence" value="ECO:0007669"/>
    <property type="project" value="UniProtKB-UniRule"/>
</dbReference>
<dbReference type="GO" id="GO:0008654">
    <property type="term" value="P:phospholipid biosynthetic process"/>
    <property type="evidence" value="ECO:0007669"/>
    <property type="project" value="UniProtKB-KW"/>
</dbReference>
<dbReference type="Gene3D" id="3.40.718.10">
    <property type="entry name" value="Isopropylmalate Dehydrogenase"/>
    <property type="match status" value="1"/>
</dbReference>
<dbReference type="HAMAP" id="MF_00019">
    <property type="entry name" value="PlsX"/>
    <property type="match status" value="1"/>
</dbReference>
<dbReference type="InterPro" id="IPR003664">
    <property type="entry name" value="FA_synthesis"/>
</dbReference>
<dbReference type="InterPro" id="IPR012281">
    <property type="entry name" value="Phospholipid_synth_PlsX-like"/>
</dbReference>
<dbReference type="NCBIfam" id="TIGR00182">
    <property type="entry name" value="plsX"/>
    <property type="match status" value="1"/>
</dbReference>
<dbReference type="PANTHER" id="PTHR30100">
    <property type="entry name" value="FATTY ACID/PHOSPHOLIPID SYNTHESIS PROTEIN PLSX"/>
    <property type="match status" value="1"/>
</dbReference>
<dbReference type="PANTHER" id="PTHR30100:SF1">
    <property type="entry name" value="PHOSPHATE ACYLTRANSFERASE"/>
    <property type="match status" value="1"/>
</dbReference>
<dbReference type="Pfam" id="PF02504">
    <property type="entry name" value="FA_synthesis"/>
    <property type="match status" value="1"/>
</dbReference>
<dbReference type="PIRSF" id="PIRSF002465">
    <property type="entry name" value="Phsphlp_syn_PlsX"/>
    <property type="match status" value="1"/>
</dbReference>
<dbReference type="SUPFAM" id="SSF53659">
    <property type="entry name" value="Isocitrate/Isopropylmalate dehydrogenase-like"/>
    <property type="match status" value="1"/>
</dbReference>
<sequence>MTKAPVTPERDIAASGPYALAVDAMGGDRAPDIVLAGLDLAADRHPKARILLIGDEALLRPALAKYPKAARLCDIRHAAASISMDMKPTAALRVRGSSMRMAMEAVAAGEACGVVSAGNSGAMLALAKIIVKALPGISRPAMIAVEPSARGDIVMLDLGANIACDARNLVEFAIMGEAFAQAALGLPSPTIGLLNVGSEELKGDDRLRQASERLRASPLAPQFHGFVEGHDITAGTTDVVVTDGFTGNVALKTGEGALKLAFSLLKRVFQTNLLTRLGYLLVKPGLERMREWIDPRRYNGALFVGLNGIVVKSHGGADGESFAAAVDVAMDAVTHHLNDKIRARLEQLGMGAPEPVAPAAAKAAPEPVS</sequence>
<evidence type="ECO:0000255" key="1">
    <source>
        <dbReference type="HAMAP-Rule" id="MF_00019"/>
    </source>
</evidence>
<proteinExistence type="inferred from homology"/>
<gene>
    <name evidence="1" type="primary">plsX</name>
    <name type="ordered locus">GOX0116</name>
</gene>
<reference key="1">
    <citation type="journal article" date="2005" name="Nat. Biotechnol.">
        <title>Complete genome sequence of the acetic acid bacterium Gluconobacter oxydans.</title>
        <authorList>
            <person name="Prust C."/>
            <person name="Hoffmeister M."/>
            <person name="Liesegang H."/>
            <person name="Wiezer A."/>
            <person name="Fricke W.F."/>
            <person name="Ehrenreich A."/>
            <person name="Gottschalk G."/>
            <person name="Deppenmeier U."/>
        </authorList>
    </citation>
    <scope>NUCLEOTIDE SEQUENCE [LARGE SCALE GENOMIC DNA]</scope>
    <source>
        <strain>621H</strain>
    </source>
</reference>
<protein>
    <recommendedName>
        <fullName evidence="1">Phosphate acyltransferase</fullName>
        <ecNumber evidence="1">2.3.1.274</ecNumber>
    </recommendedName>
    <alternativeName>
        <fullName evidence="1">Acyl-ACP phosphotransacylase</fullName>
    </alternativeName>
    <alternativeName>
        <fullName evidence="1">Acyl-[acyl-carrier-protein]--phosphate acyltransferase</fullName>
    </alternativeName>
    <alternativeName>
        <fullName evidence="1">Phosphate-acyl-ACP acyltransferase</fullName>
    </alternativeName>
</protein>